<accession>P42866</accession>
<accession>A1XGX3</accession>
<accession>A1XGX4</accession>
<accession>A1YAC3</accession>
<accession>A1YAC4</accession>
<accession>A5H7G2</accession>
<accession>Q4U2P4</accession>
<accession>Q4U2Q6</accession>
<accession>Q548C6</accession>
<accession>Q60768</accession>
<accession>Q6YC50</accession>
<accession>Q8CAN5</accession>
<accession>Q8CGW2</accession>
<accession>Q8CH73</accession>
<accession>Q8CH74</accession>
<accession>Q8CH75</accession>
<accession>Q8VBU3</accession>
<accession>Q8VBU6</accession>
<accession>Q8VBX8</accession>
<accession>Q8VI69</accession>
<accession>Q8VI70</accession>
<accession>Q8VI71</accession>
<accession>Q8VIN3</accession>
<accession>Q8VIN4</accession>
<accession>Q8VIN5</accession>
<accession>Q8VIN6</accession>
<accession>Q8VIP0</accession>
<accession>Q8VIP1</accession>
<accession>Q9JIY1</accession>
<accession>Q9R0D1</accession>
<accession>Q9R1L9</accession>
<accession>Q9R1M0</accession>
<organism>
    <name type="scientific">Mus musculus</name>
    <name type="common">Mouse</name>
    <dbReference type="NCBI Taxonomy" id="10090"/>
    <lineage>
        <taxon>Eukaryota</taxon>
        <taxon>Metazoa</taxon>
        <taxon>Chordata</taxon>
        <taxon>Craniata</taxon>
        <taxon>Vertebrata</taxon>
        <taxon>Euteleostomi</taxon>
        <taxon>Mammalia</taxon>
        <taxon>Eutheria</taxon>
        <taxon>Euarchontoglires</taxon>
        <taxon>Glires</taxon>
        <taxon>Rodentia</taxon>
        <taxon>Myomorpha</taxon>
        <taxon>Muroidea</taxon>
        <taxon>Muridae</taxon>
        <taxon>Murinae</taxon>
        <taxon>Mus</taxon>
        <taxon>Mus</taxon>
    </lineage>
</organism>
<sequence length="398" mass="44421">MDSSAGPGNISDCSDPLAPASCSPAPGSWLNLSHVDGNQSDPCGPNRTGLGGSHSLCPQTGSPSMVTAITIMALYSIVCVVGLFGNFLVMYVIVRYTKMKTATNIYIFNLALADALATSTLPFQSVNYLMGTWPFGNILCKIVISIDYYNMFTSIFTLCTMSVDRYIAVCHPVKALDFRTPRNAKIVNVCNWILSSAIGLPVMFMATTKYRQGSIDCTLTFSHPTWYWENLLKICVFIFAFIMPVLIITVCYGLMILRLKSVRMLSGSKEKDRNLRRITRMVLVVVAVFIVCWTPIHIYVIIKALITIPETTFQTVSWHFCIALGYTNSCLNPVLYAFLDENFKRCFREFCIPTSSTIEQQNSARIRQNTREHPSTANTVDRTNHQLENLEAETAPLP</sequence>
<gene>
    <name type="primary">Oprm1</name>
    <name type="synonym">Mor</name>
    <name type="synonym">Oprm</name>
</gene>
<protein>
    <recommendedName>
        <fullName>Mu-type opioid receptor</fullName>
        <shortName>M-OR-1</shortName>
        <shortName>MOR-1</shortName>
    </recommendedName>
</protein>
<keyword id="KW-0002">3D-structure</keyword>
<keyword id="KW-0025">Alternative splicing</keyword>
<keyword id="KW-1003">Cell membrane</keyword>
<keyword id="KW-0966">Cell projection</keyword>
<keyword id="KW-1015">Disulfide bond</keyword>
<keyword id="KW-0967">Endosome</keyword>
<keyword id="KW-0297">G-protein coupled receptor</keyword>
<keyword id="KW-0325">Glycoprotein</keyword>
<keyword id="KW-0449">Lipoprotein</keyword>
<keyword id="KW-0472">Membrane</keyword>
<keyword id="KW-0564">Palmitate</keyword>
<keyword id="KW-0597">Phosphoprotein</keyword>
<keyword id="KW-0675">Receptor</keyword>
<keyword id="KW-1185">Reference proteome</keyword>
<keyword id="KW-0807">Transducer</keyword>
<keyword id="KW-0812">Transmembrane</keyword>
<keyword id="KW-1133">Transmembrane helix</keyword>
<keyword id="KW-0832">Ubl conjugation</keyword>
<feature type="chain" id="PRO_0000069975" description="Mu-type opioid receptor">
    <location>
        <begin position="1"/>
        <end position="398"/>
    </location>
</feature>
<feature type="topological domain" description="Extracellular" evidence="19 20">
    <location>
        <begin position="1"/>
        <end position="66"/>
    </location>
</feature>
<feature type="transmembrane region" description="Helical; Name=1" evidence="19 20">
    <location>
        <begin position="67"/>
        <end position="91"/>
    </location>
</feature>
<feature type="topological domain" description="Cytoplasmic" evidence="19 20">
    <location>
        <begin position="92"/>
        <end position="104"/>
    </location>
</feature>
<feature type="transmembrane region" description="Helical; Name=2" evidence="19 20">
    <location>
        <begin position="105"/>
        <end position="129"/>
    </location>
</feature>
<feature type="topological domain" description="Extracellular" evidence="19 20">
    <location>
        <begin position="130"/>
        <end position="140"/>
    </location>
</feature>
<feature type="transmembrane region" description="Helical; Name=3" evidence="19 20">
    <location>
        <begin position="141"/>
        <end position="163"/>
    </location>
</feature>
<feature type="topological domain" description="Cytoplasmic" evidence="19 20">
    <location>
        <begin position="164"/>
        <end position="183"/>
    </location>
</feature>
<feature type="transmembrane region" description="Helical; Name=4" evidence="19 20">
    <location>
        <begin position="184"/>
        <end position="205"/>
    </location>
</feature>
<feature type="topological domain" description="Extracellular" evidence="19 20">
    <location>
        <begin position="206"/>
        <end position="228"/>
    </location>
</feature>
<feature type="transmembrane region" description="Helical; Name=5" evidence="19 20">
    <location>
        <begin position="229"/>
        <end position="253"/>
    </location>
</feature>
<feature type="topological domain" description="Cytoplasmic" evidence="19 20">
    <location>
        <begin position="254"/>
        <end position="277"/>
    </location>
</feature>
<feature type="transmembrane region" description="Helical; Name=6" evidence="19 20">
    <location>
        <begin position="278"/>
        <end position="304"/>
    </location>
</feature>
<feature type="topological domain" description="Extracellular" evidence="19 20">
    <location>
        <begin position="305"/>
        <end position="312"/>
    </location>
</feature>
<feature type="transmembrane region" description="Helical; Name=7" evidence="19 20">
    <location>
        <begin position="313"/>
        <end position="336"/>
    </location>
</feature>
<feature type="topological domain" description="Cytoplasmic" evidence="19 20">
    <location>
        <begin position="337"/>
        <end position="398"/>
    </location>
</feature>
<feature type="region of interest" description="Disordered" evidence="6">
    <location>
        <begin position="362"/>
        <end position="383"/>
    </location>
</feature>
<feature type="short sequence motif" description="NPxxY; plays a role in stabilizing the activated conformation of the receptor" evidence="20">
    <location>
        <begin position="332"/>
        <end position="336"/>
    </location>
</feature>
<feature type="modified residue" description="Phosphotyrosine" evidence="1">
    <location>
        <position position="166"/>
    </location>
</feature>
<feature type="modified residue" description="Phosphoserine" evidence="39">
    <location>
        <position position="363"/>
    </location>
</feature>
<feature type="modified residue" description="Phosphothreonine" evidence="1">
    <location>
        <position position="370"/>
    </location>
</feature>
<feature type="modified residue" description="Phosphoserine" evidence="1">
    <location>
        <position position="375"/>
    </location>
</feature>
<feature type="modified residue" description="Phosphothreonine" evidence="1">
    <location>
        <position position="394"/>
    </location>
</feature>
<feature type="lipid moiety-binding region" description="S-palmitoyl cysteine" evidence="4">
    <location>
        <position position="351"/>
    </location>
</feature>
<feature type="glycosylation site" description="N-linked (GlcNAc...) asparagine" evidence="4">
    <location>
        <position position="9"/>
    </location>
</feature>
<feature type="glycosylation site" description="N-linked (GlcNAc...) asparagine" evidence="4">
    <location>
        <position position="31"/>
    </location>
</feature>
<feature type="glycosylation site" description="N-linked (GlcNAc...) asparagine" evidence="4">
    <location>
        <position position="38"/>
    </location>
</feature>
<feature type="glycosylation site" description="N-linked (GlcNAc...) asparagine" evidence="4">
    <location>
        <position position="46"/>
    </location>
</feature>
<feature type="disulfide bond" evidence="5 19 20 37 38">
    <location>
        <begin position="140"/>
        <end position="217"/>
    </location>
</feature>
<feature type="splice variant" id="VSP_042332" description="In isoform 14, isoform 15 and isoform 16." evidence="28">
    <original>MDSSAGPGNISDCSDPLAPASCSPAPGSWLNLSHVDGNQSDPCGPNRTGLGGSHSLCPQTGSPSMVTAITIMALYSIVCVVGLFGNFLVMYVIV</original>
    <variation>MMEAFSKSAFQKLRQRDGNQEGKSYL</variation>
    <location>
        <begin position="1"/>
        <end position="94"/>
    </location>
</feature>
<feature type="splice variant" id="VSP_042333" description="In isoform 10." evidence="26 32">
    <original>LENLEAETAPLP</original>
    <variation>KKKLDSQRGCVQHPV</variation>
    <location>
        <begin position="387"/>
        <end position="398"/>
    </location>
</feature>
<feature type="splice variant" id="VSP_042334" description="In isoform 11." evidence="27">
    <original>LENLEAETAPLP</original>
    <variation>APCACVPGANRGQTKASDLLDLELETVGSHQADAETNPGPYEGSKCAEPLAISLVPLY</variation>
    <location>
        <begin position="387"/>
        <end position="398"/>
    </location>
</feature>
<feature type="splice variant" id="VSP_042335" description="In isoform 12." evidence="33">
    <original>LENLEAETAPLP</original>
    <variation>PTLAVSVAQIFTGYPSPTHVEKPCKSCMDR</variation>
    <location>
        <begin position="387"/>
        <end position="398"/>
    </location>
</feature>
<feature type="splice variant" id="VSP_042336" description="In isoform 13." evidence="35">
    <original>LENLEAETAPLP</original>
    <variation>IMKFEAIYPKLSFKSWALKYFTFIREKKRNTKAGALPTCHAGSPSQAHRGVAAWLLPLRHMGPSYPS</variation>
    <location>
        <begin position="387"/>
        <end position="398"/>
    </location>
</feature>
<feature type="splice variant" id="VSP_042337" description="In isoform 17." evidence="32">
    <original>LENLEAETAPLP</original>
    <variation>PTLAVSVAQIFTGYPSPTHVEKPCKSCMDSVDCYNRKQQTGSLRKNKKKKKRRKNKQNILEAGISRGMRNLLPDDGPRQESGEGQLGR</variation>
    <location>
        <begin position="387"/>
        <end position="398"/>
    </location>
</feature>
<feature type="splice variant" id="VSP_042338" description="In isoform 18." evidence="32">
    <original>LENLEAETAPLP</original>
    <variation>KQEKTKTKSAWEIWEQKEHTLLLGETHLTIQHLS</variation>
    <location>
        <begin position="387"/>
        <end position="398"/>
    </location>
</feature>
<feature type="splice variant" id="VSP_042339" description="In isoform 2." evidence="34">
    <original>LENLEAETAPLP</original>
    <variation>VCAF</variation>
    <location>
        <begin position="387"/>
        <end position="398"/>
    </location>
</feature>
<feature type="splice variant" id="VSP_042340" description="In isoform 3." evidence="30">
    <original>LENLEAETAPLP</original>
    <variation>KIDLF</variation>
    <location>
        <begin position="387"/>
        <end position="398"/>
    </location>
</feature>
<feature type="splice variant" id="VSP_042341" description="In isoform 4." evidence="30">
    <original>LENLEAETAPLP</original>
    <variation>KLLMWRAMPTFKRHLAIMLSLDN</variation>
    <location>
        <begin position="387"/>
        <end position="398"/>
    </location>
</feature>
<feature type="splice variant" id="VSP_042342" description="In isoform 5." evidence="30">
    <original>LENLEAETAPLP</original>
    <variation>TSLTLQ</variation>
    <location>
        <begin position="387"/>
        <end position="398"/>
    </location>
</feature>
<feature type="splice variant" id="VSP_042343" description="In isoform 6." evidence="30">
    <original>LENLEAETAPLP</original>
    <variation>AHQKPQECLKCRCLSLTILVICLHFQHQQFFIMIKKNVS</variation>
    <location>
        <begin position="387"/>
        <end position="398"/>
    </location>
</feature>
<feature type="splice variant" id="VSP_042344" description="In isoform 7." evidence="30">
    <original>LENLEAETAPLP</original>
    <variation>CV</variation>
    <location>
        <begin position="387"/>
        <end position="398"/>
    </location>
</feature>
<feature type="splice variant" id="VSP_042345" description="In isoform 8 and isoform 15." evidence="26 28 29 31">
    <original>LENLEAETAPLP</original>
    <variation>PTLAVSVAQIFTGYPSPTHVEKPCKSCMDRGMRNLLPDDGPRQESGEGQLGR</variation>
    <location>
        <begin position="387"/>
        <end position="398"/>
    </location>
</feature>
<feature type="splice variant" id="VSP_042346" description="In isoform 9 and isoform 16." evidence="26 28">
    <original>LENLEAETAPLP</original>
    <variation>RNEEPSS</variation>
    <location>
        <begin position="387"/>
        <end position="398"/>
    </location>
</feature>
<feature type="splice variant" id="VSP_042347" description="In isoform 19." evidence="32">
    <original>ENLEAETAPLP</original>
    <variation>AFGCCNEHHDQR</variation>
    <location>
        <begin position="388"/>
        <end position="398"/>
    </location>
</feature>
<feature type="mutagenesis site" description="Abolishes receptor recycling; when associated with A-390." evidence="10">
    <original>L</original>
    <variation>A</variation>
    <location>
        <position position="387"/>
    </location>
</feature>
<feature type="mutagenesis site" description="Abolishes receptor recycling; when associated with A-387." evidence="10">
    <original>L</original>
    <variation>A</variation>
    <location>
        <position position="390"/>
    </location>
</feature>
<feature type="sequence conflict" description="In Ref. 3; AAA86878." evidence="36" ref="3">
    <original>C</original>
    <variation>W</variation>
    <location>
        <position position="22"/>
    </location>
</feature>
<feature type="strand" evidence="41">
    <location>
        <begin position="54"/>
        <end position="56"/>
    </location>
</feature>
<feature type="helix" evidence="41">
    <location>
        <begin position="65"/>
        <end position="95"/>
    </location>
</feature>
<feature type="turn" evidence="41">
    <location>
        <begin position="96"/>
        <end position="99"/>
    </location>
</feature>
<feature type="helix" evidence="41">
    <location>
        <begin position="102"/>
        <end position="118"/>
    </location>
</feature>
<feature type="helix" evidence="41">
    <location>
        <begin position="121"/>
        <end position="129"/>
    </location>
</feature>
<feature type="strand" evidence="42">
    <location>
        <begin position="130"/>
        <end position="132"/>
    </location>
</feature>
<feature type="helix" evidence="41">
    <location>
        <begin position="136"/>
        <end position="170"/>
    </location>
</feature>
<feature type="helix" evidence="41">
    <location>
        <begin position="172"/>
        <end position="178"/>
    </location>
</feature>
<feature type="helix" evidence="41">
    <location>
        <begin position="181"/>
        <end position="205"/>
    </location>
</feature>
<feature type="strand" evidence="41">
    <location>
        <begin position="206"/>
        <end position="211"/>
    </location>
</feature>
<feature type="strand" evidence="41">
    <location>
        <begin position="214"/>
        <end position="219"/>
    </location>
</feature>
<feature type="strand" evidence="40">
    <location>
        <begin position="222"/>
        <end position="224"/>
    </location>
</feature>
<feature type="helix" evidence="41">
    <location>
        <begin position="225"/>
        <end position="240"/>
    </location>
</feature>
<feature type="helix" evidence="41">
    <location>
        <begin position="242"/>
        <end position="261"/>
    </location>
</feature>
<feature type="turn" evidence="42">
    <location>
        <begin position="263"/>
        <end position="265"/>
    </location>
</feature>
<feature type="helix" evidence="41">
    <location>
        <begin position="268"/>
        <end position="305"/>
    </location>
</feature>
<feature type="helix" evidence="41">
    <location>
        <begin position="312"/>
        <end position="336"/>
    </location>
</feature>
<feature type="turn" evidence="41">
    <location>
        <begin position="337"/>
        <end position="339"/>
    </location>
</feature>
<feature type="helix" evidence="41">
    <location>
        <begin position="341"/>
        <end position="346"/>
    </location>
</feature>
<comment type="function">
    <text evidence="1 7 9 11 12 13 17 19 20 21 22 23 24 25">Receptor for endogenous opioids such as beta-endorphin and endomorphin (PubMed:10842167, PubMed:16682964, PubMed:21422164, PubMed:22437502, PubMed:26245379, PubMed:7797593, PubMed:9037090). Receptor for natural and synthetic opioids including morphine, heroin, DAMGO, fentanyl, etorphine, buprenorphin and methadone (PubMed:16682964, PubMed:7797593, PubMed:9037090). Also activated by enkephalin peptides, such as Met-enkephalin or Met-enkephalin-Arg-Phe, with higher affinity for Met-enkephalin-Arg-Phe (PubMed:35201898, PubMed:6933569). Agonist binding to the receptor induces coupling to an inactive GDP-bound heterotrimeric G-protein complex and subsequent exchange of GDP for GTP in the G-protein alpha subunit leading to dissociation of the G-protein complex with the free GTP-bound G-protein alpha and the G-protein beta-gamma dimer activating downstream cellular effectors (PubMed:10842167, PubMed:21422164, PubMed:22437502). The agonist- and cell type-specific activity is predominantly coupled to pertussis toxin-sensitive G(i) and G(o) G alpha proteins, GNAI1, GNAI2, GNAI3 and GNAO1 isoforms Alpha-1 and Alpha-2, and to a lesser extent to pertussis toxin-insensitive G alpha proteins GNAZ and GNA15 (PubMed:26245379, PubMed:9767386). They mediate an array of downstream cellular responses, including inhibition of adenylate cyclase activity and both N-type and L-type calcium channels, activation of inward rectifying potassium channels, mitogen-activated protein kinase (MAPK), phospholipase C (PLC), phosphoinositide/protein kinase (PKC), phosphoinositide 3-kinase (PI3K) and regulation of NF-kappa-B (By similarity). Also couples to adenylate cyclase stimulatory G alpha proteins (By similarity). The selective temporal coupling to G-proteins and subsequent signaling can be regulated by RGSZ proteins, such as RGS9, RGS17 and RGS4 (PubMed:15827571, PubMed:17725581). Phosphorylation by members of the GPRK subfamily of Ser/Thr protein kinases and association with beta-arrestins is involved in short-term receptor desensitization (By similarity). Beta-arrestins associate with the GPRK-phosphorylated receptor and uncouple it from the G-protein thus terminating signal transduction (By similarity). The phosphorylated receptor is internalized through endocytosis via clathrin-coated pits which involves beta-arrestins (PubMed:12642578). The activation of the ERK pathway occurs either in a G-protein-dependent or a beta-arrestin-dependent manner and is regulated by agonist-specific receptor phosphorylation (By similarity). Acts as a class A G-protein coupled receptor (GPCR) which dissociates from beta-arrestin at or near the plasma membrane and undergoes rapid recycling (By similarity). Receptor down-regulation pathways are varying with the agonist and occur dependent or independent of G-protein coupling. Endogenous ligands induce rapid desensitization, endocytosis and recycling (By similarity). Heterooligomerization with other GPCRs can modulate agonist binding, signaling and trafficking properties (By similarity).</text>
</comment>
<comment type="function">
    <molecule>Isoform 9</molecule>
    <text evidence="18">Isoform 9 is involved in morphine-induced scratching and seems to cross-activate GRPR in response to morphine.</text>
</comment>
<comment type="subunit">
    <text evidence="1 2 7 8 11 13 14 15 16 17 18 19 20">Forms homooligomers and heterooligomers with other GPCRs, such as OPRD1, OPRK1, OPRL1, NPFFR2, ADRA2A, SSTR2, CNR1 and CCR5 (probably in dimeric forms) (PubMed:10842167, PubMed:12270145, PubMed:18836069, PubMed:21422164). Interacts with heterotrimeric G proteins; interaction with a heterotrimeric complex containing GNAI1, GNB1 and GNG2 stabilizes the active conformation of the receptor and increases its affinity for endomorphin-2, the synthetic opioid peptide DAMGO and for morphinan agonists (PubMed:26245379). Interacts with PPL; the interaction disrupts agonist-mediated G-protein activation. Interacts (via C-terminus) with DNAJB4 (via C-terminus). Interacts with calmodulin; the interaction inhibits the constitutive activity of OPRM1; it abolishes basal and attenuates agonist-stimulated G-protein coupling. Interacts with FLNA, PLD2, RANBP9 and WLS and GPM6A (By similarity). Interacts with RTP4 (PubMed:18836069). Interacts with SYP and GNAS (By similarity). Interacts with RGS9, RGS17, RGS20, RGS4, PPP1R9B and HINT1 (PubMed:15827571, PubMed:17725581, PubMed:18439408, PubMed:21153910). Isoform 9 interacts with GRPR (PubMed:22000021).</text>
</comment>
<comment type="interaction">
    <interactant intactId="EBI-5282656">
        <id>P42866</id>
    </interactant>
    <interactant intactId="EBI-353997">
        <id>P04899</id>
        <label>GNAI2</label>
    </interactant>
    <organismsDiffer>true</organismsDiffer>
    <experiments>2</experiments>
</comment>
<comment type="interaction">
    <interactant intactId="EBI-5282656">
        <id>P42866</id>
    </interactant>
    <interactant intactId="EBI-7607528">
        <id>P63092-2</id>
        <label>GNAS</label>
    </interactant>
    <organismsDiffer>true</organismsDiffer>
    <experiments>2</experiments>
</comment>
<comment type="interaction">
    <interactant intactId="EBI-6049667">
        <id>P42866-9</id>
    </interactant>
    <interactant intactId="EBI-6049651">
        <id>P21729</id>
        <label>Grpr</label>
    </interactant>
    <organismsDiffer>false</organismsDiffer>
    <experiments>4</experiments>
</comment>
<comment type="subcellular location">
    <subcellularLocation>
        <location evidence="9 19 23">Cell membrane</location>
        <topology evidence="9 19 20 23">Multi-pass membrane protein</topology>
    </subcellularLocation>
    <subcellularLocation>
        <location evidence="3">Cell projection</location>
        <location evidence="3">Axon</location>
    </subcellularLocation>
    <subcellularLocation>
        <location evidence="3">Perikaryon</location>
    </subcellularLocation>
    <subcellularLocation>
        <location evidence="3">Cell projection</location>
        <location evidence="3">Dendrite</location>
    </subcellularLocation>
    <subcellularLocation>
        <location evidence="3">Endosome</location>
    </subcellularLocation>
    <text evidence="3">Is rapidly internalized after agonist binding.</text>
</comment>
<comment type="alternative products">
    <event type="alternative splicing"/>
    <isoform>
        <id>P42866-1</id>
        <name>1</name>
        <name>MOR-1</name>
        <name>MOR-H</name>
        <name>MOR-1J</name>
        <name>MOR-1T</name>
        <sequence type="displayed"/>
    </isoform>
    <isoform>
        <id>P42866-2</id>
        <name>2</name>
        <name>MOR-1A</name>
        <sequence type="described" ref="VSP_042339"/>
    </isoform>
    <isoform>
        <id>P42866-3</id>
        <name>3</name>
        <name>MOR-1B1</name>
        <sequence type="described" ref="VSP_042340"/>
    </isoform>
    <isoform>
        <id>P42866-4</id>
        <name>4</name>
        <name>MOR-1B2</name>
        <sequence type="described" ref="VSP_042341"/>
    </isoform>
    <isoform>
        <id>P42866-5</id>
        <name>5</name>
        <name>MOR-1B3</name>
        <name>MOR-1Q</name>
        <sequence type="described" ref="VSP_042342"/>
    </isoform>
    <isoform>
        <id>P42866-6</id>
        <name>6</name>
        <name>MOR-1B4</name>
        <name>MOR-1R</name>
        <sequence type="described" ref="VSP_042343"/>
    </isoform>
    <isoform>
        <id>P42866-7</id>
        <name>7</name>
        <name>MOR-1B5</name>
        <name>MOR-1P</name>
        <sequence type="described" ref="VSP_042344"/>
    </isoform>
    <isoform>
        <id>P42866-8</id>
        <name>8</name>
        <name>MOR-1C</name>
        <sequence type="described" ref="VSP_042345"/>
    </isoform>
    <isoform>
        <id>P42866-9</id>
        <name>9</name>
        <name>MOR-1D</name>
        <sequence type="described" ref="VSP_042346"/>
    </isoform>
    <isoform>
        <id>P42866-10</id>
        <name>10</name>
        <name>MOR-1E</name>
        <name>MOR-1Eiii</name>
        <name>MOR-1Eiv</name>
        <sequence type="described" ref="VSP_042333"/>
    </isoform>
    <isoform>
        <id>P42866-11</id>
        <name>11</name>
        <name>MOR-1F</name>
        <sequence type="described" ref="VSP_042334"/>
    </isoform>
    <isoform>
        <id>P42866-12</id>
        <name>12</name>
        <name>MOR-1O</name>
        <sequence type="described" ref="VSP_042335"/>
    </isoform>
    <isoform>
        <id>P42866-13</id>
        <name>13</name>
        <name>MOR-1P</name>
        <name>MOR-1R</name>
        <sequence type="described" ref="VSP_042336"/>
    </isoform>
    <isoform>
        <id>P42866-14</id>
        <name>14</name>
        <name>MOR-1G</name>
        <sequence type="described" ref="VSP_042332"/>
    </isoform>
    <isoform>
        <id>P42866-15</id>
        <name>15</name>
        <name>MOR-1M</name>
        <sequence type="described" ref="VSP_042332 VSP_042345"/>
    </isoform>
    <isoform>
        <id>P42866-16</id>
        <name>16</name>
        <name>MOR-1N</name>
        <sequence type="described" ref="VSP_042332 VSP_042346"/>
    </isoform>
    <isoform>
        <id>P42866-17</id>
        <name>17</name>
        <name>MOR-1U</name>
        <sequence type="described" ref="VSP_042337"/>
    </isoform>
    <isoform>
        <id>P42866-18</id>
        <name>18</name>
        <name>MOR-1V</name>
        <sequence type="described" ref="VSP_042338"/>
    </isoform>
    <isoform>
        <id>P42866-19</id>
        <name>19</name>
        <name>MOR-1W</name>
        <sequence type="described" ref="VSP_042347"/>
    </isoform>
    <text>Additional isoforms seem to exist. Functional relevance for short isoforms with one transmembrane domain only is unsure and these isoforms are not included.</text>
</comment>
<comment type="PTM">
    <text evidence="1">Phosphorylated. Differentially phosphorylated in basal and agonist-induced conditions. Agonist-mediated phosphorylation modulates receptor internalization. Phosphorylated by GRK2 in a agonist-dependent manner. Phosphorylation at Tyr-166 requires receptor activation, is dependent on non-receptor protein tyrosine kinase Src and results in a decrease in agonist efficacy by reducing G-protein coupling efficiency. Phosphorylated on tyrosine residues; the phosphorylation is involved in agonist-induced G-protein-independent receptor down-regulation. Phosphorylation at Ser-375 is involved in G-protein-dependent but not beta-arrestin-dependent activation of the ERK pathway.</text>
</comment>
<comment type="PTM">
    <text evidence="15">Ubiquitinated. A basal ubiquitination seems not to be related to degradation. Ubiquitination is increased upon formation of OPRM1:OPRD1 oligomers leading to proteasomal degradation; the ubiquitination is diminished by RTP4.</text>
</comment>
<comment type="disruption phenotype">
    <text evidence="12">During adult neurogenesis in hippocampus, increased numbers of granule cells maturing into neurons, larger granule cell layers and increased numbers of granule cells.</text>
</comment>
<comment type="similarity">
    <text evidence="5">Belongs to the G-protein coupled receptor 1 family.</text>
</comment>
<name>OPRM_MOUSE</name>
<evidence type="ECO:0000250" key="1">
    <source>
        <dbReference type="UniProtKB" id="P33535"/>
    </source>
</evidence>
<evidence type="ECO:0000250" key="2">
    <source>
        <dbReference type="UniProtKB" id="P35372"/>
    </source>
</evidence>
<evidence type="ECO:0000250" key="3">
    <source>
        <dbReference type="UniProtKB" id="P97266"/>
    </source>
</evidence>
<evidence type="ECO:0000255" key="4"/>
<evidence type="ECO:0000255" key="5">
    <source>
        <dbReference type="PROSITE-ProRule" id="PRU00521"/>
    </source>
</evidence>
<evidence type="ECO:0000256" key="6">
    <source>
        <dbReference type="SAM" id="MobiDB-lite"/>
    </source>
</evidence>
<evidence type="ECO:0000269" key="7">
    <source>
    </source>
</evidence>
<evidence type="ECO:0000269" key="8">
    <source>
    </source>
</evidence>
<evidence type="ECO:0000269" key="9">
    <source>
    </source>
</evidence>
<evidence type="ECO:0000269" key="10">
    <source>
    </source>
</evidence>
<evidence type="ECO:0000269" key="11">
    <source>
    </source>
</evidence>
<evidence type="ECO:0000269" key="12">
    <source>
    </source>
</evidence>
<evidence type="ECO:0000269" key="13">
    <source>
    </source>
</evidence>
<evidence type="ECO:0000269" key="14">
    <source>
    </source>
</evidence>
<evidence type="ECO:0000269" key="15">
    <source>
    </source>
</evidence>
<evidence type="ECO:0000269" key="16">
    <source>
    </source>
</evidence>
<evidence type="ECO:0000269" key="17">
    <source>
    </source>
</evidence>
<evidence type="ECO:0000269" key="18">
    <source>
    </source>
</evidence>
<evidence type="ECO:0000269" key="19">
    <source>
    </source>
</evidence>
<evidence type="ECO:0000269" key="20">
    <source>
    </source>
</evidence>
<evidence type="ECO:0000269" key="21">
    <source>
    </source>
</evidence>
<evidence type="ECO:0000269" key="22">
    <source>
    </source>
</evidence>
<evidence type="ECO:0000269" key="23">
    <source>
    </source>
</evidence>
<evidence type="ECO:0000269" key="24">
    <source>
    </source>
</evidence>
<evidence type="ECO:0000269" key="25">
    <source>
    </source>
</evidence>
<evidence type="ECO:0000303" key="26">
    <source>
    </source>
</evidence>
<evidence type="ECO:0000303" key="27">
    <source>
    </source>
</evidence>
<evidence type="ECO:0000303" key="28">
    <source>
    </source>
</evidence>
<evidence type="ECO:0000303" key="29">
    <source>
    </source>
</evidence>
<evidence type="ECO:0000303" key="30">
    <source>
    </source>
</evidence>
<evidence type="ECO:0000303" key="31">
    <source>
    </source>
</evidence>
<evidence type="ECO:0000303" key="32">
    <source>
    </source>
</evidence>
<evidence type="ECO:0000303" key="33">
    <source ref="10"/>
</evidence>
<evidence type="ECO:0000303" key="34">
    <source ref="5"/>
</evidence>
<evidence type="ECO:0000303" key="35">
    <source ref="9"/>
</evidence>
<evidence type="ECO:0000305" key="36"/>
<evidence type="ECO:0007744" key="37">
    <source>
        <dbReference type="PDB" id="4DKL"/>
    </source>
</evidence>
<evidence type="ECO:0007744" key="38">
    <source>
        <dbReference type="PDB" id="5C1M"/>
    </source>
</evidence>
<evidence type="ECO:0007744" key="39">
    <source>
    </source>
</evidence>
<evidence type="ECO:0007829" key="40">
    <source>
        <dbReference type="PDB" id="4DKL"/>
    </source>
</evidence>
<evidence type="ECO:0007829" key="41">
    <source>
        <dbReference type="PDB" id="5C1M"/>
    </source>
</evidence>
<evidence type="ECO:0007829" key="42">
    <source>
        <dbReference type="PDB" id="7T2G"/>
    </source>
</evidence>
<dbReference type="EMBL" id="U10561">
    <property type="protein sequence ID" value="AAB60673.1"/>
    <property type="molecule type" value="Genomic_DNA"/>
</dbReference>
<dbReference type="EMBL" id="U10558">
    <property type="protein sequence ID" value="AAB60673.1"/>
    <property type="status" value="JOINED"/>
    <property type="molecule type" value="Genomic_DNA"/>
</dbReference>
<dbReference type="EMBL" id="U10559">
    <property type="protein sequence ID" value="AAB60673.1"/>
    <property type="status" value="JOINED"/>
    <property type="molecule type" value="Genomic_DNA"/>
</dbReference>
<dbReference type="EMBL" id="U10560">
    <property type="protein sequence ID" value="AAB60673.1"/>
    <property type="status" value="JOINED"/>
    <property type="molecule type" value="Genomic_DNA"/>
</dbReference>
<dbReference type="EMBL" id="U26915">
    <property type="protein sequence ID" value="AAA81170.1"/>
    <property type="molecule type" value="mRNA"/>
</dbReference>
<dbReference type="EMBL" id="U19380">
    <property type="protein sequence ID" value="AAA86878.1"/>
    <property type="molecule type" value="mRNA"/>
</dbReference>
<dbReference type="EMBL" id="AF062753">
    <property type="protein sequence ID" value="AAD54415.1"/>
    <property type="molecule type" value="mRNA"/>
</dbReference>
<dbReference type="EMBL" id="AF074973">
    <property type="protein sequence ID" value="AAD51861.1"/>
    <property type="molecule type" value="mRNA"/>
</dbReference>
<dbReference type="EMBL" id="AF074974">
    <property type="protein sequence ID" value="AAD51862.1"/>
    <property type="molecule type" value="mRNA"/>
</dbReference>
<dbReference type="EMBL" id="AF167565">
    <property type="protein sequence ID" value="AAL55581.1"/>
    <property type="molecule type" value="mRNA"/>
</dbReference>
<dbReference type="EMBL" id="AF167568">
    <property type="protein sequence ID" value="AAF79213.1"/>
    <property type="molecule type" value="mRNA"/>
</dbReference>
<dbReference type="EMBL" id="AB047546">
    <property type="protein sequence ID" value="BAB63338.1"/>
    <property type="molecule type" value="mRNA"/>
</dbReference>
<dbReference type="EMBL" id="AF062755">
    <property type="protein sequence ID" value="AAL34927.1"/>
    <property type="molecule type" value="mRNA"/>
</dbReference>
<dbReference type="EMBL" id="AF260311">
    <property type="protein sequence ID" value="AAL34400.1"/>
    <property type="molecule type" value="mRNA"/>
</dbReference>
<dbReference type="EMBL" id="AF074972">
    <property type="protein sequence ID" value="AAL34394.1"/>
    <property type="molecule type" value="mRNA"/>
</dbReference>
<dbReference type="EMBL" id="AF400246">
    <property type="protein sequence ID" value="AAL34507.1"/>
    <property type="molecule type" value="mRNA"/>
</dbReference>
<dbReference type="EMBL" id="AF400247">
    <property type="protein sequence ID" value="AAL34508.1"/>
    <property type="molecule type" value="mRNA"/>
</dbReference>
<dbReference type="EMBL" id="AF400248">
    <property type="protein sequence ID" value="AAL34509.1"/>
    <property type="molecule type" value="mRNA"/>
</dbReference>
<dbReference type="EMBL" id="AY036621">
    <property type="protein sequence ID" value="AAK74188.1"/>
    <property type="molecule type" value="mRNA"/>
</dbReference>
<dbReference type="EMBL" id="AY160190">
    <property type="protein sequence ID" value="AAO18365.1"/>
    <property type="molecule type" value="mRNA"/>
</dbReference>
<dbReference type="EMBL" id="AF167566">
    <property type="protein sequence ID" value="AAL55582.1"/>
    <property type="molecule type" value="mRNA"/>
</dbReference>
<dbReference type="EMBL" id="AF167567">
    <property type="protein sequence ID" value="AAL55583.1"/>
    <property type="molecule type" value="mRNA"/>
</dbReference>
<dbReference type="EMBL" id="AF346812">
    <property type="protein sequence ID" value="AAO13792.1"/>
    <property type="molecule type" value="mRNA"/>
</dbReference>
<dbReference type="EMBL" id="AF346813">
    <property type="protein sequence ID" value="AAO13793.1"/>
    <property type="molecule type" value="mRNA"/>
</dbReference>
<dbReference type="EMBL" id="AF346814">
    <property type="protein sequence ID" value="AAO13794.1"/>
    <property type="molecule type" value="mRNA"/>
</dbReference>
<dbReference type="EMBL" id="AK038389">
    <property type="protein sequence ID" value="BAC29982.1"/>
    <property type="molecule type" value="mRNA"/>
</dbReference>
<dbReference type="EMBL" id="DQ363376">
    <property type="protein sequence ID" value="ABC94862.1"/>
    <property type="molecule type" value="mRNA"/>
</dbReference>
<dbReference type="EMBL" id="DQ363377">
    <property type="protein sequence ID" value="ABC94863.1"/>
    <property type="molecule type" value="mRNA"/>
</dbReference>
<dbReference type="EMBL" id="DQ868787">
    <property type="protein sequence ID" value="ABI95796.1"/>
    <property type="molecule type" value="mRNA"/>
</dbReference>
<dbReference type="EMBL" id="DQ868788">
    <property type="protein sequence ID" value="ABI95797.2"/>
    <property type="molecule type" value="mRNA"/>
</dbReference>
<dbReference type="EMBL" id="EF105311">
    <property type="protein sequence ID" value="ABN45760.1"/>
    <property type="molecule type" value="mRNA"/>
</dbReference>
<dbReference type="EMBL" id="EF105312">
    <property type="protein sequence ID" value="ABN45761.1"/>
    <property type="molecule type" value="mRNA"/>
</dbReference>
<dbReference type="EMBL" id="EF105313">
    <property type="protein sequence ID" value="ABN45762.1"/>
    <property type="molecule type" value="mRNA"/>
</dbReference>
<dbReference type="EMBL" id="EF105314">
    <property type="protein sequence ID" value="ABN45763.1"/>
    <property type="molecule type" value="mRNA"/>
</dbReference>
<dbReference type="EMBL" id="CH466562">
    <property type="protein sequence ID" value="EDL03560.1"/>
    <property type="molecule type" value="Genomic_DNA"/>
</dbReference>
<dbReference type="EMBL" id="CH466562">
    <property type="protein sequence ID" value="EDL03561.1"/>
    <property type="molecule type" value="Genomic_DNA"/>
</dbReference>
<dbReference type="EMBL" id="CH466562">
    <property type="protein sequence ID" value="EDL03562.1"/>
    <property type="molecule type" value="Genomic_DNA"/>
</dbReference>
<dbReference type="EMBL" id="AC153981">
    <property type="status" value="NOT_ANNOTATED_CDS"/>
    <property type="molecule type" value="Genomic_DNA"/>
</dbReference>
<dbReference type="EMBL" id="AC155718">
    <property type="status" value="NOT_ANNOTATED_CDS"/>
    <property type="molecule type" value="Genomic_DNA"/>
</dbReference>
<dbReference type="EMBL" id="AC164171">
    <property type="status" value="NOT_ANNOTATED_CDS"/>
    <property type="molecule type" value="Genomic_DNA"/>
</dbReference>
<dbReference type="EMBL" id="BC119545">
    <property type="protein sequence ID" value="AAI19546.1"/>
    <property type="molecule type" value="mRNA"/>
</dbReference>
<dbReference type="CCDS" id="CCDS56687.1">
    <molecule id="P42866-8"/>
</dbReference>
<dbReference type="CCDS" id="CCDS78783.1">
    <molecule id="P42866-14"/>
</dbReference>
<dbReference type="CCDS" id="CCDS78784.1">
    <molecule id="P42866-15"/>
</dbReference>
<dbReference type="CCDS" id="CCDS78785.1">
    <molecule id="P42866-16"/>
</dbReference>
<dbReference type="CCDS" id="CCDS78787.1">
    <molecule id="P42866-1"/>
</dbReference>
<dbReference type="CCDS" id="CCDS78788.1">
    <molecule id="P42866-9"/>
</dbReference>
<dbReference type="CCDS" id="CCDS83672.1">
    <molecule id="P42866-4"/>
</dbReference>
<dbReference type="CCDS" id="CCDS83673.1">
    <molecule id="P42866-3"/>
</dbReference>
<dbReference type="CCDS" id="CCDS83674.1">
    <molecule id="P42866-2"/>
</dbReference>
<dbReference type="PIR" id="A57510">
    <property type="entry name" value="A57510"/>
</dbReference>
<dbReference type="RefSeq" id="NP_001034741.1">
    <molecule id="P42866-8"/>
    <property type="nucleotide sequence ID" value="NM_001039652.2"/>
</dbReference>
<dbReference type="RefSeq" id="NP_001289722.1">
    <molecule id="P42866-1"/>
    <property type="nucleotide sequence ID" value="NM_001302793.1"/>
</dbReference>
<dbReference type="RefSeq" id="NP_001289723.1">
    <molecule id="P42866-14"/>
    <property type="nucleotide sequence ID" value="NM_001302794.1"/>
</dbReference>
<dbReference type="RefSeq" id="NP_001289724.1">
    <molecule id="P42866-15"/>
    <property type="nucleotide sequence ID" value="NM_001302795.1"/>
</dbReference>
<dbReference type="RefSeq" id="NP_001289725.1">
    <molecule id="P42866-16"/>
    <property type="nucleotide sequence ID" value="NM_001302796.1"/>
</dbReference>
<dbReference type="RefSeq" id="NP_001291866.1">
    <molecule id="P42866-2"/>
    <property type="nucleotide sequence ID" value="NM_001304937.1"/>
</dbReference>
<dbReference type="RefSeq" id="NP_001291867.1">
    <molecule id="P42866-3"/>
    <property type="nucleotide sequence ID" value="NM_001304938.1"/>
</dbReference>
<dbReference type="RefSeq" id="NP_001291877.1">
    <molecule id="P42866-4"/>
    <property type="nucleotide sequence ID" value="NM_001304948.1"/>
</dbReference>
<dbReference type="RefSeq" id="NP_001291879.1">
    <molecule id="P42866-9"/>
    <property type="nucleotide sequence ID" value="NM_001304950.1"/>
</dbReference>
<dbReference type="RefSeq" id="NP_001291884.1">
    <molecule id="P42866-17"/>
    <property type="nucleotide sequence ID" value="NM_001304955.1"/>
</dbReference>
<dbReference type="RefSeq" id="XP_017169315.1">
    <property type="nucleotide sequence ID" value="XM_017313826.1"/>
</dbReference>
<dbReference type="RefSeq" id="XP_017169316.1">
    <molecule id="P42866-6"/>
    <property type="nucleotide sequence ID" value="XM_017313827.3"/>
</dbReference>
<dbReference type="PDB" id="4DKL">
    <property type="method" value="X-ray"/>
    <property type="resolution" value="2.80 A"/>
    <property type="chains" value="A=52-360"/>
</dbReference>
<dbReference type="PDB" id="5C1M">
    <property type="method" value="X-ray"/>
    <property type="resolution" value="2.10 A"/>
    <property type="chains" value="A=52-347"/>
</dbReference>
<dbReference type="PDB" id="6DDE">
    <property type="method" value="EM"/>
    <property type="resolution" value="3.50 A"/>
    <property type="chains" value="R=9-358"/>
</dbReference>
<dbReference type="PDB" id="6DDF">
    <property type="method" value="EM"/>
    <property type="resolution" value="3.50 A"/>
    <property type="chains" value="R=9-358"/>
</dbReference>
<dbReference type="PDB" id="7SBF">
    <property type="method" value="EM"/>
    <property type="resolution" value="2.90 A"/>
    <property type="chains" value="R=73-398"/>
</dbReference>
<dbReference type="PDB" id="7SCG">
    <property type="method" value="EM"/>
    <property type="resolution" value="3.00 A"/>
    <property type="chains" value="D=9-358"/>
</dbReference>
<dbReference type="PDB" id="7T2G">
    <property type="method" value="EM"/>
    <property type="resolution" value="2.50 A"/>
    <property type="chains" value="R=73-398"/>
</dbReference>
<dbReference type="PDB" id="7T2H">
    <property type="method" value="EM"/>
    <property type="resolution" value="3.20 A"/>
    <property type="chains" value="D=9-358"/>
</dbReference>
<dbReference type="PDB" id="7U2K">
    <property type="method" value="EM"/>
    <property type="resolution" value="3.30 A"/>
    <property type="chains" value="D=9-358"/>
</dbReference>
<dbReference type="PDB" id="7U2L">
    <property type="method" value="EM"/>
    <property type="resolution" value="3.20 A"/>
    <property type="chains" value="D=9-358"/>
</dbReference>
<dbReference type="PDB" id="7UL4">
    <property type="method" value="EM"/>
    <property type="resolution" value="2.80 A"/>
    <property type="chains" value="A=6-398"/>
</dbReference>
<dbReference type="PDB" id="8E0G">
    <property type="method" value="X-ray"/>
    <property type="resolution" value="2.10 A"/>
    <property type="chains" value="A=52-347"/>
</dbReference>
<dbReference type="PDB" id="8QOT">
    <property type="method" value="EM"/>
    <property type="resolution" value="3.20 A"/>
    <property type="chains" value="A=2-398"/>
</dbReference>
<dbReference type="PDB" id="9BJK">
    <property type="method" value="EM"/>
    <property type="resolution" value="3.26 A"/>
    <property type="chains" value="R=6-398"/>
</dbReference>
<dbReference type="PDB" id="9BQJ">
    <property type="method" value="EM"/>
    <property type="resolution" value="3.30 A"/>
    <property type="chains" value="D=9-358"/>
</dbReference>
<dbReference type="PDBsum" id="4DKL"/>
<dbReference type="PDBsum" id="5C1M"/>
<dbReference type="PDBsum" id="6DDE"/>
<dbReference type="PDBsum" id="6DDF"/>
<dbReference type="PDBsum" id="7SBF"/>
<dbReference type="PDBsum" id="7SCG"/>
<dbReference type="PDBsum" id="7T2G"/>
<dbReference type="PDBsum" id="7T2H"/>
<dbReference type="PDBsum" id="7U2K"/>
<dbReference type="PDBsum" id="7U2L"/>
<dbReference type="PDBsum" id="7UL4"/>
<dbReference type="PDBsum" id="8E0G"/>
<dbReference type="PDBsum" id="8QOT"/>
<dbReference type="PDBsum" id="9BJK"/>
<dbReference type="PDBsum" id="9BQJ"/>
<dbReference type="EMDB" id="EMD-18541"/>
<dbReference type="EMDB" id="EMD-24978"/>
<dbReference type="EMDB" id="EMD-25034"/>
<dbReference type="EMDB" id="EMD-25612"/>
<dbReference type="EMDB" id="EMD-25613"/>
<dbReference type="EMDB" id="EMD-26313"/>
<dbReference type="EMDB" id="EMD-26314"/>
<dbReference type="EMDB" id="EMD-26591"/>
<dbReference type="EMDB" id="EMD-44635"/>
<dbReference type="EMDB" id="EMD-44812"/>
<dbReference type="EMDB" id="EMD-48527"/>
<dbReference type="EMDB" id="EMD-48528"/>
<dbReference type="EMDB" id="EMD-7868"/>
<dbReference type="EMDB" id="EMD-7869"/>
<dbReference type="SMR" id="P42866"/>
<dbReference type="BioGRID" id="201972">
    <property type="interactions" value="3"/>
</dbReference>
<dbReference type="CORUM" id="P42866"/>
<dbReference type="DIP" id="DIP-46148N"/>
<dbReference type="FunCoup" id="P42866">
    <property type="interactions" value="783"/>
</dbReference>
<dbReference type="IntAct" id="P42866">
    <property type="interactions" value="11"/>
</dbReference>
<dbReference type="MINT" id="P42866"/>
<dbReference type="STRING" id="10090.ENSMUSP00000101236"/>
<dbReference type="BindingDB" id="P42866"/>
<dbReference type="ChEMBL" id="CHEMBL2858"/>
<dbReference type="DrugCentral" id="P42866"/>
<dbReference type="GuidetoPHARMACOLOGY" id="319"/>
<dbReference type="GlyCosmos" id="P42866">
    <property type="glycosylation" value="4 sites, No reported glycans"/>
</dbReference>
<dbReference type="GlyGen" id="P42866">
    <property type="glycosylation" value="5 sites, 1 O-linked glycan (1 site)"/>
</dbReference>
<dbReference type="iPTMnet" id="P42866"/>
<dbReference type="PhosphoSitePlus" id="P42866"/>
<dbReference type="SwissPalm" id="P42866"/>
<dbReference type="jPOST" id="P42866"/>
<dbReference type="PaxDb" id="10090-ENSMUSP00000101236"/>
<dbReference type="ProteomicsDB" id="294202">
    <molecule id="P42866-1"/>
</dbReference>
<dbReference type="ProteomicsDB" id="294203">
    <molecule id="P42866-2"/>
</dbReference>
<dbReference type="ProteomicsDB" id="294204">
    <molecule id="P42866-3"/>
</dbReference>
<dbReference type="ProteomicsDB" id="294205">
    <molecule id="P42866-4"/>
</dbReference>
<dbReference type="ProteomicsDB" id="294206">
    <molecule id="P42866-5"/>
</dbReference>
<dbReference type="ProteomicsDB" id="294207">
    <molecule id="P42866-6"/>
</dbReference>
<dbReference type="ProteomicsDB" id="294208">
    <molecule id="P42866-7"/>
</dbReference>
<dbReference type="ProteomicsDB" id="294209">
    <molecule id="P42866-8"/>
</dbReference>
<dbReference type="ProteomicsDB" id="294210">
    <molecule id="P42866-9"/>
</dbReference>
<dbReference type="ProteomicsDB" id="294211">
    <molecule id="P42866-10"/>
</dbReference>
<dbReference type="ProteomicsDB" id="294212">
    <molecule id="P42866-11"/>
</dbReference>
<dbReference type="ProteomicsDB" id="294213">
    <molecule id="P42866-12"/>
</dbReference>
<dbReference type="ProteomicsDB" id="294214">
    <molecule id="P42866-13"/>
</dbReference>
<dbReference type="ProteomicsDB" id="294215">
    <molecule id="P42866-14"/>
</dbReference>
<dbReference type="ProteomicsDB" id="294216">
    <molecule id="P42866-15"/>
</dbReference>
<dbReference type="ProteomicsDB" id="294217">
    <molecule id="P42866-16"/>
</dbReference>
<dbReference type="ProteomicsDB" id="294218">
    <molecule id="P42866-17"/>
</dbReference>
<dbReference type="ProteomicsDB" id="294219">
    <molecule id="P42866-18"/>
</dbReference>
<dbReference type="ProteomicsDB" id="294220">
    <molecule id="P42866-19"/>
</dbReference>
<dbReference type="ABCD" id="P42866">
    <property type="antibodies" value="1 sequenced antibody"/>
</dbReference>
<dbReference type="Antibodypedia" id="2929">
    <property type="antibodies" value="602 antibodies from 43 providers"/>
</dbReference>
<dbReference type="DNASU" id="18390"/>
<dbReference type="Ensembl" id="ENSMUST00000000783.13">
    <molecule id="P42866-6"/>
    <property type="protein sequence ID" value="ENSMUSP00000000783.7"/>
    <property type="gene ID" value="ENSMUSG00000000766.19"/>
</dbReference>
<dbReference type="Ensembl" id="ENSMUST00000052751.14">
    <molecule id="P42866-9"/>
    <property type="protein sequence ID" value="ENSMUSP00000060329.8"/>
    <property type="gene ID" value="ENSMUSG00000000766.19"/>
</dbReference>
<dbReference type="Ensembl" id="ENSMUST00000056385.14">
    <molecule id="P42866-1"/>
    <property type="protein sequence ID" value="ENSMUSP00000060590.8"/>
    <property type="gene ID" value="ENSMUSG00000000766.19"/>
</dbReference>
<dbReference type="Ensembl" id="ENSMUST00000063036.14">
    <molecule id="P42866-16"/>
    <property type="protein sequence ID" value="ENSMUSP00000053498.8"/>
    <property type="gene ID" value="ENSMUSG00000000766.19"/>
</dbReference>
<dbReference type="Ensembl" id="ENSMUST00000092729.11">
    <molecule id="P42866-7"/>
    <property type="protein sequence ID" value="ENSMUSP00000090405.5"/>
    <property type="gene ID" value="ENSMUSG00000000766.19"/>
</dbReference>
<dbReference type="Ensembl" id="ENSMUST00000092731.11">
    <molecule id="P42866-5"/>
    <property type="protein sequence ID" value="ENSMUSP00000090407.5"/>
    <property type="gene ID" value="ENSMUSG00000000766.19"/>
</dbReference>
<dbReference type="Ensembl" id="ENSMUST00000092734.11">
    <molecule id="P42866-1"/>
    <property type="protein sequence ID" value="ENSMUSP00000090410.5"/>
    <property type="gene ID" value="ENSMUSG00000000766.19"/>
</dbReference>
<dbReference type="Ensembl" id="ENSMUST00000105602.8">
    <molecule id="P42866-2"/>
    <property type="protein sequence ID" value="ENSMUSP00000101227.2"/>
    <property type="gene ID" value="ENSMUSG00000000766.19"/>
</dbReference>
<dbReference type="Ensembl" id="ENSMUST00000105605.8">
    <molecule id="P42866-3"/>
    <property type="protein sequence ID" value="ENSMUSP00000101230.2"/>
    <property type="gene ID" value="ENSMUSG00000000766.19"/>
</dbReference>
<dbReference type="Ensembl" id="ENSMUST00000105607.8">
    <molecule id="P42866-1"/>
    <property type="protein sequence ID" value="ENSMUSP00000101232.2"/>
    <property type="gene ID" value="ENSMUSG00000000766.19"/>
</dbReference>
<dbReference type="Ensembl" id="ENSMUST00000105611.8">
    <molecule id="P42866-8"/>
    <property type="protein sequence ID" value="ENSMUSP00000101236.2"/>
    <property type="gene ID" value="ENSMUSG00000000766.19"/>
</dbReference>
<dbReference type="Ensembl" id="ENSMUST00000105615.9">
    <molecule id="P42866-15"/>
    <property type="protein sequence ID" value="ENSMUSP00000101240.3"/>
    <property type="gene ID" value="ENSMUSG00000000766.19"/>
</dbReference>
<dbReference type="Ensembl" id="ENSMUST00000135502.8">
    <molecule id="P42866-12"/>
    <property type="protein sequence ID" value="ENSMUSP00000135143.2"/>
    <property type="gene ID" value="ENSMUSG00000000766.19"/>
</dbReference>
<dbReference type="Ensembl" id="ENSMUST00000144264.8">
    <molecule id="P42866-19"/>
    <property type="protein sequence ID" value="ENSMUSP00000115836.2"/>
    <property type="gene ID" value="ENSMUSG00000000766.19"/>
</dbReference>
<dbReference type="Ensembl" id="ENSMUST00000147171.8">
    <molecule id="P42866-14"/>
    <property type="protein sequence ID" value="ENSMUSP00000117950.2"/>
    <property type="gene ID" value="ENSMUSG00000000766.19"/>
</dbReference>
<dbReference type="Ensembl" id="ENSMUST00000154906.8">
    <molecule id="P42866-4"/>
    <property type="protein sequence ID" value="ENSMUSP00000114342.2"/>
    <property type="gene ID" value="ENSMUSG00000000766.19"/>
</dbReference>
<dbReference type="GeneID" id="18390"/>
<dbReference type="KEGG" id="mmu:18390"/>
<dbReference type="UCSC" id="uc007eff.2">
    <molecule id="P42866-9"/>
    <property type="organism name" value="mouse"/>
</dbReference>
<dbReference type="UCSC" id="uc007efl.2">
    <molecule id="P42866-17"/>
    <property type="organism name" value="mouse"/>
</dbReference>
<dbReference type="UCSC" id="uc007efn.1">
    <molecule id="P42866-8"/>
    <property type="organism name" value="mouse"/>
</dbReference>
<dbReference type="UCSC" id="uc007efp.2">
    <molecule id="P42866-15"/>
    <property type="organism name" value="mouse"/>
</dbReference>
<dbReference type="UCSC" id="uc007efq.2">
    <molecule id="P42866-16"/>
    <property type="organism name" value="mouse"/>
</dbReference>
<dbReference type="UCSC" id="uc007eft.1">
    <molecule id="P42866-12"/>
    <property type="organism name" value="mouse"/>
</dbReference>
<dbReference type="UCSC" id="uc007efw.3">
    <molecule id="P42866-1"/>
    <property type="organism name" value="mouse"/>
</dbReference>
<dbReference type="UCSC" id="uc007egc.2">
    <molecule id="P42866-14"/>
    <property type="organism name" value="mouse"/>
</dbReference>
<dbReference type="UCSC" id="uc007ege.2">
    <molecule id="P42866-3"/>
    <property type="organism name" value="mouse"/>
</dbReference>
<dbReference type="UCSC" id="uc007egf.2">
    <molecule id="P42866-2"/>
    <property type="organism name" value="mouse"/>
</dbReference>
<dbReference type="UCSC" id="uc056yga.1">
    <molecule id="P42866-4"/>
    <property type="organism name" value="mouse"/>
</dbReference>
<dbReference type="AGR" id="MGI:97441"/>
<dbReference type="CTD" id="4988"/>
<dbReference type="MGI" id="MGI:97441">
    <property type="gene designation" value="Oprm1"/>
</dbReference>
<dbReference type="VEuPathDB" id="HostDB:ENSMUSG00000000766"/>
<dbReference type="eggNOG" id="KOG3656">
    <property type="taxonomic scope" value="Eukaryota"/>
</dbReference>
<dbReference type="GeneTree" id="ENSGT00940000158236"/>
<dbReference type="InParanoid" id="P42866"/>
<dbReference type="OMA" id="RIRQHTR"/>
<dbReference type="OrthoDB" id="6076970at2759"/>
<dbReference type="TreeFam" id="TF315737"/>
<dbReference type="Reactome" id="R-MMU-111885">
    <property type="pathway name" value="Opioid Signalling"/>
</dbReference>
<dbReference type="Reactome" id="R-MMU-202040">
    <property type="pathway name" value="G-protein activation"/>
</dbReference>
<dbReference type="Reactome" id="R-MMU-375276">
    <property type="pathway name" value="Peptide ligand-binding receptors"/>
</dbReference>
<dbReference type="Reactome" id="R-MMU-418594">
    <property type="pathway name" value="G alpha (i) signalling events"/>
</dbReference>
<dbReference type="BioGRID-ORCS" id="18390">
    <property type="hits" value="1 hit in 78 CRISPR screens"/>
</dbReference>
<dbReference type="ChiTaRS" id="Oprm1">
    <property type="organism name" value="mouse"/>
</dbReference>
<dbReference type="EvolutionaryTrace" id="P42866"/>
<dbReference type="PRO" id="PR:P42866"/>
<dbReference type="Proteomes" id="UP000000589">
    <property type="component" value="Chromosome 10"/>
</dbReference>
<dbReference type="RNAct" id="P42866">
    <property type="molecule type" value="protein"/>
</dbReference>
<dbReference type="Bgee" id="ENSMUSG00000000766">
    <property type="expression patterns" value="Expressed in medial habenular nucleus and 41 other cell types or tissues"/>
</dbReference>
<dbReference type="ExpressionAtlas" id="P42866">
    <property type="expression patterns" value="baseline and differential"/>
</dbReference>
<dbReference type="GO" id="GO:0030424">
    <property type="term" value="C:axon"/>
    <property type="evidence" value="ECO:0000250"/>
    <property type="project" value="UniProtKB"/>
</dbReference>
<dbReference type="GO" id="GO:0030425">
    <property type="term" value="C:dendrite"/>
    <property type="evidence" value="ECO:0000250"/>
    <property type="project" value="UniProtKB"/>
</dbReference>
<dbReference type="GO" id="GO:0005768">
    <property type="term" value="C:endosome"/>
    <property type="evidence" value="ECO:0000250"/>
    <property type="project" value="UniProtKB"/>
</dbReference>
<dbReference type="GO" id="GO:0098982">
    <property type="term" value="C:GABA-ergic synapse"/>
    <property type="evidence" value="ECO:0000314"/>
    <property type="project" value="SynGO"/>
</dbReference>
<dbReference type="GO" id="GO:0016020">
    <property type="term" value="C:membrane"/>
    <property type="evidence" value="ECO:0000314"/>
    <property type="project" value="MGI"/>
</dbReference>
<dbReference type="GO" id="GO:0043204">
    <property type="term" value="C:perikaryon"/>
    <property type="evidence" value="ECO:0007669"/>
    <property type="project" value="UniProtKB-SubCell"/>
</dbReference>
<dbReference type="GO" id="GO:0005886">
    <property type="term" value="C:plasma membrane"/>
    <property type="evidence" value="ECO:0000250"/>
    <property type="project" value="UniProtKB"/>
</dbReference>
<dbReference type="GO" id="GO:0098793">
    <property type="term" value="C:presynapse"/>
    <property type="evidence" value="ECO:0007669"/>
    <property type="project" value="GOC"/>
</dbReference>
<dbReference type="GO" id="GO:0004979">
    <property type="term" value="F:beta-endorphin receptor activity"/>
    <property type="evidence" value="ECO:0007669"/>
    <property type="project" value="InterPro"/>
</dbReference>
<dbReference type="GO" id="GO:0004985">
    <property type="term" value="F:G protein-coupled opioid receptor activity"/>
    <property type="evidence" value="ECO:0000314"/>
    <property type="project" value="UniProtKB"/>
</dbReference>
<dbReference type="GO" id="GO:0004930">
    <property type="term" value="F:G protein-coupled receptor activity"/>
    <property type="evidence" value="ECO:0000250"/>
    <property type="project" value="UniProtKB"/>
</dbReference>
<dbReference type="GO" id="GO:0001965">
    <property type="term" value="F:G-protein alpha-subunit binding"/>
    <property type="evidence" value="ECO:0000250"/>
    <property type="project" value="UniProtKB"/>
</dbReference>
<dbReference type="GO" id="GO:0038047">
    <property type="term" value="F:morphine receptor activity"/>
    <property type="evidence" value="ECO:0000250"/>
    <property type="project" value="UniProtKB"/>
</dbReference>
<dbReference type="GO" id="GO:0007191">
    <property type="term" value="P:adenylate cyclase-activating dopamine receptor signaling pathway"/>
    <property type="evidence" value="ECO:0000314"/>
    <property type="project" value="MGI"/>
</dbReference>
<dbReference type="GO" id="GO:0007197">
    <property type="term" value="P:adenylate cyclase-inhibiting G protein-coupled acetylcholine receptor signaling pathway"/>
    <property type="evidence" value="ECO:0000250"/>
    <property type="project" value="UniProtKB"/>
</dbReference>
<dbReference type="GO" id="GO:0007193">
    <property type="term" value="P:adenylate cyclase-inhibiting G protein-coupled receptor signaling pathway"/>
    <property type="evidence" value="ECO:0000314"/>
    <property type="project" value="MGI"/>
</dbReference>
<dbReference type="GO" id="GO:0038003">
    <property type="term" value="P:G protein-coupled opioid receptor signaling pathway"/>
    <property type="evidence" value="ECO:0000316"/>
    <property type="project" value="MGI"/>
</dbReference>
<dbReference type="GO" id="GO:0007626">
    <property type="term" value="P:locomotory behavior"/>
    <property type="evidence" value="ECO:0000315"/>
    <property type="project" value="MGI"/>
</dbReference>
<dbReference type="GO" id="GO:0051481">
    <property type="term" value="P:negative regulation of cytosolic calcium ion concentration"/>
    <property type="evidence" value="ECO:0000250"/>
    <property type="project" value="UniProtKB"/>
</dbReference>
<dbReference type="GO" id="GO:0045019">
    <property type="term" value="P:negative regulation of nitric oxide biosynthetic process"/>
    <property type="evidence" value="ECO:0000250"/>
    <property type="project" value="UniProtKB"/>
</dbReference>
<dbReference type="GO" id="GO:0061358">
    <property type="term" value="P:negative regulation of Wnt protein secretion"/>
    <property type="evidence" value="ECO:0000250"/>
    <property type="project" value="UniProtKB"/>
</dbReference>
<dbReference type="GO" id="GO:0007200">
    <property type="term" value="P:phospholipase C-activating G protein-coupled receptor signaling pathway"/>
    <property type="evidence" value="ECO:0000250"/>
    <property type="project" value="UniProtKB"/>
</dbReference>
<dbReference type="GO" id="GO:0070374">
    <property type="term" value="P:positive regulation of ERK1 and ERK2 cascade"/>
    <property type="evidence" value="ECO:0000250"/>
    <property type="project" value="UniProtKB"/>
</dbReference>
<dbReference type="GO" id="GO:0050769">
    <property type="term" value="P:positive regulation of neurogenesis"/>
    <property type="evidence" value="ECO:0000315"/>
    <property type="project" value="UniProtKB"/>
</dbReference>
<dbReference type="GO" id="GO:0099171">
    <property type="term" value="P:presynaptic modulation of chemical synaptic transmission"/>
    <property type="evidence" value="ECO:0000314"/>
    <property type="project" value="SynGO"/>
</dbReference>
<dbReference type="GO" id="GO:2000310">
    <property type="term" value="P:regulation of NMDA receptor activity"/>
    <property type="evidence" value="ECO:0000250"/>
    <property type="project" value="UniProtKB"/>
</dbReference>
<dbReference type="GO" id="GO:0019233">
    <property type="term" value="P:sensory perception of pain"/>
    <property type="evidence" value="ECO:0000315"/>
    <property type="project" value="UniProtKB"/>
</dbReference>
<dbReference type="GO" id="GO:0019226">
    <property type="term" value="P:transmission of nerve impulse"/>
    <property type="evidence" value="ECO:0000315"/>
    <property type="project" value="MGI"/>
</dbReference>
<dbReference type="CDD" id="cd15090">
    <property type="entry name" value="7tmA_Mu_opioid_R"/>
    <property type="match status" value="1"/>
</dbReference>
<dbReference type="DisProt" id="DP00974"/>
<dbReference type="FunFam" id="1.20.1070.10:FF:000014">
    <property type="entry name" value="Kappa-type opioid receptor 1"/>
    <property type="match status" value="1"/>
</dbReference>
<dbReference type="Gene3D" id="1.20.1070.10">
    <property type="entry name" value="Rhodopsin 7-helix transmembrane proteins"/>
    <property type="match status" value="1"/>
</dbReference>
<dbReference type="InterPro" id="IPR000276">
    <property type="entry name" value="GPCR_Rhodpsn"/>
</dbReference>
<dbReference type="InterPro" id="IPR017452">
    <property type="entry name" value="GPCR_Rhodpsn_7TM"/>
</dbReference>
<dbReference type="InterPro" id="IPR000105">
    <property type="entry name" value="Mu_opioid_rcpt"/>
</dbReference>
<dbReference type="InterPro" id="IPR001418">
    <property type="entry name" value="Opioid_rcpt"/>
</dbReference>
<dbReference type="PANTHER" id="PTHR24229:SF7">
    <property type="entry name" value="MU-TYPE OPIOID RECEPTOR"/>
    <property type="match status" value="1"/>
</dbReference>
<dbReference type="PANTHER" id="PTHR24229">
    <property type="entry name" value="NEUROPEPTIDES RECEPTOR"/>
    <property type="match status" value="1"/>
</dbReference>
<dbReference type="Pfam" id="PF00001">
    <property type="entry name" value="7tm_1"/>
    <property type="match status" value="1"/>
</dbReference>
<dbReference type="PRINTS" id="PR00237">
    <property type="entry name" value="GPCRRHODOPSN"/>
</dbReference>
<dbReference type="PRINTS" id="PR00537">
    <property type="entry name" value="MUOPIOIDR"/>
</dbReference>
<dbReference type="PRINTS" id="PR00384">
    <property type="entry name" value="OPIOIDR"/>
</dbReference>
<dbReference type="SUPFAM" id="SSF81321">
    <property type="entry name" value="Family A G protein-coupled receptor-like"/>
    <property type="match status" value="1"/>
</dbReference>
<dbReference type="PROSITE" id="PS00237">
    <property type="entry name" value="G_PROTEIN_RECEP_F1_1"/>
    <property type="match status" value="1"/>
</dbReference>
<dbReference type="PROSITE" id="PS50262">
    <property type="entry name" value="G_PROTEIN_RECEP_F1_2"/>
    <property type="match status" value="1"/>
</dbReference>
<reference key="1">
    <citation type="journal article" date="1994" name="Proc. Natl. Acad. Sci. U.S.A.">
        <title>Genomic structure analysis of promoter sequence of a mouse mu opioid receptor gene.</title>
        <authorList>
            <person name="Min B.H."/>
            <person name="Augustin L.B."/>
            <person name="Felsheim R.F."/>
            <person name="Fuchs J.A."/>
            <person name="Loh H.H."/>
        </authorList>
    </citation>
    <scope>NUCLEOTIDE SEQUENCE [GENOMIC DNA]</scope>
    <source>
        <strain>C57BL/6J</strain>
        <tissue>Liver</tissue>
    </source>
</reference>
<reference key="2">
    <citation type="journal article" date="1995" name="FEBS Lett.">
        <title>Antisense mapping the MOR-1 opioid receptor: evidence for alternative splicing and a novel morphine-6 beta-glucuronide receptor.</title>
        <authorList>
            <person name="Rossi G.C."/>
            <person name="Pan Y.X."/>
            <person name="Brown G.P."/>
            <person name="Pasternak G.W."/>
        </authorList>
    </citation>
    <scope>NUCLEOTIDE SEQUENCE [MRNA] (ISOFORM 1)</scope>
    <source>
        <tissue>Brain</tissue>
    </source>
</reference>
<reference key="3">
    <citation type="journal article" date="1995" name="J. Biol. Chem.">
        <title>Characterization of the murine mu opioid receptor gene.</title>
        <authorList>
            <person name="Kaufman D.L."/>
            <person name="Keith D.E."/>
            <person name="Anton B."/>
            <person name="Tian J."/>
            <person name="Magendzo K."/>
            <person name="Newman D."/>
            <person name="Tran T."/>
            <person name="Lee D.S."/>
            <person name="Wen C."/>
            <person name="Xia Y."/>
            <person name="Lusis A.J."/>
            <person name="Evans C.J."/>
        </authorList>
    </citation>
    <scope>NUCLEOTIDE SEQUENCE [MRNA] (ISOFORM 1)</scope>
    <scope>FUNCTION</scope>
    <scope>SUBCELLULAR LOCATION</scope>
    <source>
        <strain>BALB/cJ</strain>
        <tissue>Brain</tissue>
    </source>
</reference>
<reference key="4">
    <citation type="journal article" date="1999" name="Mol. Pharmacol.">
        <title>Identification and characterization of three new alternatively spliced mu-opioid receptor isoforms.</title>
        <authorList>
            <person name="Pan Y.X."/>
            <person name="Xu J."/>
            <person name="Bolan E."/>
            <person name="Abbadie C."/>
            <person name="Chang A."/>
            <person name="Zuckerman A."/>
            <person name="Rossi G."/>
            <person name="Pasternak G.W."/>
        </authorList>
    </citation>
    <scope>NUCLEOTIDE SEQUENCE [MRNA] (ISOFORMS 8; 9 AND 10)</scope>
    <source>
        <strain>C57BL/6J</strain>
    </source>
</reference>
<reference key="5">
    <citation type="submission" date="1999-07" db="EMBL/GenBank/DDBJ databases">
        <title>Identification and characterization of a mouse spliced mu-opioid receptor isoform (MOR-1A).</title>
        <authorList>
            <person name="Pan Y.-X."/>
            <person name="Xu J."/>
            <person name="Chang A."/>
            <person name="Pasternak G.W."/>
        </authorList>
    </citation>
    <scope>NUCLEOTIDE SEQUENCE [MRNA] (ISOFORM 2)</scope>
    <source>
        <strain>CD-1</strain>
    </source>
</reference>
<reference key="6">
    <citation type="journal article" date="2000" name="FEBS Lett.">
        <title>Isolation and expression of a novel alternatively spliced mu opioid receptor isoform, MOR-1F.</title>
        <authorList>
            <person name="Pan Y.X."/>
            <person name="Xu J."/>
            <person name="Bolan E."/>
            <person name="Chang A."/>
            <person name="Mahurter L."/>
            <person name="Rossi G."/>
            <person name="Pasternak G.W."/>
        </authorList>
    </citation>
    <scope>NUCLEOTIDE SEQUENCE [MRNA] (ISOFORM 11)</scope>
    <source>
        <strain>CD-1</strain>
    </source>
</reference>
<reference key="7">
    <citation type="journal article" date="2001" name="J. Neurosci.">
        <title>The untranslated region of (mu)-opioid receptor mRNA contributes to reduced opioid sensitivity in CXBK mice.</title>
        <authorList>
            <person name="Ikeda K."/>
            <person name="Kobayashi T."/>
            <person name="Ichikawa T."/>
            <person name="Kumanishi T."/>
            <person name="Niki H."/>
            <person name="Yano R."/>
        </authorList>
    </citation>
    <scope>NUCLEOTIDE SEQUENCE [MRNA] (ISOFORM 1)</scope>
    <source>
        <strain>C57BL/6By x BALB/cBy</strain>
        <tissue>Brain</tissue>
    </source>
</reference>
<reference key="8">
    <citation type="journal article" date="2001" name="Proc. Natl. Acad. Sci. U.S.A.">
        <title>Generation of the mu opioid receptor (MOR-1) protein by three new splice variants of the Oprm gene.</title>
        <authorList>
            <person name="Pan Y.X."/>
            <person name="Xu J."/>
            <person name="Mahurter L."/>
            <person name="Bolan E."/>
            <person name="Xu M."/>
            <person name="Pasternak G.W."/>
        </authorList>
    </citation>
    <scope>NUCLEOTIDE SEQUENCE [MRNA] (ISOFORMS 1; 14; 15 AND 16)</scope>
    <source>
        <strain>C57BL/6By x BALB/cBy</strain>
    </source>
</reference>
<reference key="9">
    <citation type="submission" date="2001-05" db="EMBL/GenBank/DDBJ databases">
        <title>Identification and characterization of a novel splice variant from mouse mu opioid receptor gene (Oprm).</title>
        <authorList>
            <person name="Pan Y."/>
            <person name="Xu J."/>
            <person name="Xu M."/>
            <person name="Pasternak G.W."/>
        </authorList>
    </citation>
    <scope>NUCLEOTIDE SEQUENCE [MRNA] (ISOFORM 13)</scope>
</reference>
<reference key="10">
    <citation type="submission" date="2002-10" db="EMBL/GenBank/DDBJ databases">
        <title>Identification and characterization of a new isoform from mouse mu opioid receptor gene Oprm.</title>
        <authorList>
            <person name="Xu J."/>
            <person name="Pasternak G.W."/>
        </authorList>
    </citation>
    <scope>NUCLEOTIDE SEQUENCE [MRNA] (ISOFORM 12)</scope>
    <source>
        <strain>CD-1</strain>
    </source>
</reference>
<reference key="11">
    <citation type="journal article" date="2005" name="Mol. Pharmacol.">
        <title>Identification of four novel exon 5 splice variants of the mouse mu-opioid receptor gene: functional consequences of C-terminal splicing.</title>
        <authorList>
            <person name="Pan Y.X."/>
            <person name="Xu J."/>
            <person name="Bolan E."/>
            <person name="Moskowitz H.S."/>
            <person name="Xu M."/>
            <person name="Pasternak G.W."/>
        </authorList>
    </citation>
    <scope>NUCLEOTIDE SEQUENCE [MRNA] (ISOFORMS 3; 4; 5; 6 AND 7)</scope>
    <source>
        <strain>CD-1</strain>
    </source>
</reference>
<reference key="12">
    <citation type="journal article" date="2005" name="Science">
        <title>The transcriptional landscape of the mammalian genome.</title>
        <authorList>
            <person name="Carninci P."/>
            <person name="Kasukawa T."/>
            <person name="Katayama S."/>
            <person name="Gough J."/>
            <person name="Frith M.C."/>
            <person name="Maeda N."/>
            <person name="Oyama R."/>
            <person name="Ravasi T."/>
            <person name="Lenhard B."/>
            <person name="Wells C."/>
            <person name="Kodzius R."/>
            <person name="Shimokawa K."/>
            <person name="Bajic V.B."/>
            <person name="Brenner S.E."/>
            <person name="Batalov S."/>
            <person name="Forrest A.R."/>
            <person name="Zavolan M."/>
            <person name="Davis M.J."/>
            <person name="Wilming L.G."/>
            <person name="Aidinis V."/>
            <person name="Allen J.E."/>
            <person name="Ambesi-Impiombato A."/>
            <person name="Apweiler R."/>
            <person name="Aturaliya R.N."/>
            <person name="Bailey T.L."/>
            <person name="Bansal M."/>
            <person name="Baxter L."/>
            <person name="Beisel K.W."/>
            <person name="Bersano T."/>
            <person name="Bono H."/>
            <person name="Chalk A.M."/>
            <person name="Chiu K.P."/>
            <person name="Choudhary V."/>
            <person name="Christoffels A."/>
            <person name="Clutterbuck D.R."/>
            <person name="Crowe M.L."/>
            <person name="Dalla E."/>
            <person name="Dalrymple B.P."/>
            <person name="de Bono B."/>
            <person name="Della Gatta G."/>
            <person name="di Bernardo D."/>
            <person name="Down T."/>
            <person name="Engstrom P."/>
            <person name="Fagiolini M."/>
            <person name="Faulkner G."/>
            <person name="Fletcher C.F."/>
            <person name="Fukushima T."/>
            <person name="Furuno M."/>
            <person name="Futaki S."/>
            <person name="Gariboldi M."/>
            <person name="Georgii-Hemming P."/>
            <person name="Gingeras T.R."/>
            <person name="Gojobori T."/>
            <person name="Green R.E."/>
            <person name="Gustincich S."/>
            <person name="Harbers M."/>
            <person name="Hayashi Y."/>
            <person name="Hensch T.K."/>
            <person name="Hirokawa N."/>
            <person name="Hill D."/>
            <person name="Huminiecki L."/>
            <person name="Iacono M."/>
            <person name="Ikeo K."/>
            <person name="Iwama A."/>
            <person name="Ishikawa T."/>
            <person name="Jakt M."/>
            <person name="Kanapin A."/>
            <person name="Katoh M."/>
            <person name="Kawasawa Y."/>
            <person name="Kelso J."/>
            <person name="Kitamura H."/>
            <person name="Kitano H."/>
            <person name="Kollias G."/>
            <person name="Krishnan S.P."/>
            <person name="Kruger A."/>
            <person name="Kummerfeld S.K."/>
            <person name="Kurochkin I.V."/>
            <person name="Lareau L.F."/>
            <person name="Lazarevic D."/>
            <person name="Lipovich L."/>
            <person name="Liu J."/>
            <person name="Liuni S."/>
            <person name="McWilliam S."/>
            <person name="Madan Babu M."/>
            <person name="Madera M."/>
            <person name="Marchionni L."/>
            <person name="Matsuda H."/>
            <person name="Matsuzawa S."/>
            <person name="Miki H."/>
            <person name="Mignone F."/>
            <person name="Miyake S."/>
            <person name="Morris K."/>
            <person name="Mottagui-Tabar S."/>
            <person name="Mulder N."/>
            <person name="Nakano N."/>
            <person name="Nakauchi H."/>
            <person name="Ng P."/>
            <person name="Nilsson R."/>
            <person name="Nishiguchi S."/>
            <person name="Nishikawa S."/>
            <person name="Nori F."/>
            <person name="Ohara O."/>
            <person name="Okazaki Y."/>
            <person name="Orlando V."/>
            <person name="Pang K.C."/>
            <person name="Pavan W.J."/>
            <person name="Pavesi G."/>
            <person name="Pesole G."/>
            <person name="Petrovsky N."/>
            <person name="Piazza S."/>
            <person name="Reed J."/>
            <person name="Reid J.F."/>
            <person name="Ring B.Z."/>
            <person name="Ringwald M."/>
            <person name="Rost B."/>
            <person name="Ruan Y."/>
            <person name="Salzberg S.L."/>
            <person name="Sandelin A."/>
            <person name="Schneider C."/>
            <person name="Schoenbach C."/>
            <person name="Sekiguchi K."/>
            <person name="Semple C.A."/>
            <person name="Seno S."/>
            <person name="Sessa L."/>
            <person name="Sheng Y."/>
            <person name="Shibata Y."/>
            <person name="Shimada H."/>
            <person name="Shimada K."/>
            <person name="Silva D."/>
            <person name="Sinclair B."/>
            <person name="Sperling S."/>
            <person name="Stupka E."/>
            <person name="Sugiura K."/>
            <person name="Sultana R."/>
            <person name="Takenaka Y."/>
            <person name="Taki K."/>
            <person name="Tammoja K."/>
            <person name="Tan S.L."/>
            <person name="Tang S."/>
            <person name="Taylor M.S."/>
            <person name="Tegner J."/>
            <person name="Teichmann S.A."/>
            <person name="Ueda H.R."/>
            <person name="van Nimwegen E."/>
            <person name="Verardo R."/>
            <person name="Wei C.L."/>
            <person name="Yagi K."/>
            <person name="Yamanishi H."/>
            <person name="Zabarovsky E."/>
            <person name="Zhu S."/>
            <person name="Zimmer A."/>
            <person name="Hide W."/>
            <person name="Bult C."/>
            <person name="Grimmond S.M."/>
            <person name="Teasdale R.D."/>
            <person name="Liu E.T."/>
            <person name="Brusic V."/>
            <person name="Quackenbush J."/>
            <person name="Wahlestedt C."/>
            <person name="Mattick J.S."/>
            <person name="Hume D.A."/>
            <person name="Kai C."/>
            <person name="Sasaki D."/>
            <person name="Tomaru Y."/>
            <person name="Fukuda S."/>
            <person name="Kanamori-Katayama M."/>
            <person name="Suzuki M."/>
            <person name="Aoki J."/>
            <person name="Arakawa T."/>
            <person name="Iida J."/>
            <person name="Imamura K."/>
            <person name="Itoh M."/>
            <person name="Kato T."/>
            <person name="Kawaji H."/>
            <person name="Kawagashira N."/>
            <person name="Kawashima T."/>
            <person name="Kojima M."/>
            <person name="Kondo S."/>
            <person name="Konno H."/>
            <person name="Nakano K."/>
            <person name="Ninomiya N."/>
            <person name="Nishio T."/>
            <person name="Okada M."/>
            <person name="Plessy C."/>
            <person name="Shibata K."/>
            <person name="Shiraki T."/>
            <person name="Suzuki S."/>
            <person name="Tagami M."/>
            <person name="Waki K."/>
            <person name="Watahiki A."/>
            <person name="Okamura-Oho Y."/>
            <person name="Suzuki H."/>
            <person name="Kawai J."/>
            <person name="Hayashizaki Y."/>
        </authorList>
    </citation>
    <scope>NUCLEOTIDE SEQUENCE [LARGE SCALE MRNA] (ISOFORM 8)</scope>
</reference>
<reference key="13">
    <citation type="journal article" date="2007" name="Gene">
        <title>Identification of five mouse mu-opioid receptor (MOR) gene (Oprm1) splice variants containing a newly identified alternatively spliced exon.</title>
        <authorList>
            <person name="Doyle G.A."/>
            <person name="Sheng X.R."/>
            <person name="Lin S.S."/>
            <person name="Press D.M."/>
            <person name="Grice D.E."/>
            <person name="Buono R.J."/>
            <person name="Ferraro T.N."/>
            <person name="Berrettini W.H."/>
        </authorList>
    </citation>
    <scope>NUCLEOTIDE SEQUENCE [MRNA] (ISOFORMS 1; 10; 17; 18 AND 19)</scope>
    <source>
        <strain>C57BL/6J</strain>
        <tissue>Brain</tissue>
    </source>
</reference>
<reference key="14">
    <citation type="submission" date="2005-09" db="EMBL/GenBank/DDBJ databases">
        <authorList>
            <person name="Mural R.J."/>
            <person name="Adams M.D."/>
            <person name="Myers E.W."/>
            <person name="Smith H.O."/>
            <person name="Venter J.C."/>
        </authorList>
    </citation>
    <scope>NUCLEOTIDE SEQUENCE [LARGE SCALE GENOMIC DNA]</scope>
</reference>
<reference key="15">
    <citation type="journal article" date="2009" name="PLoS Biol.">
        <title>Lineage-specific biology revealed by a finished genome assembly of the mouse.</title>
        <authorList>
            <person name="Church D.M."/>
            <person name="Goodstadt L."/>
            <person name="Hillier L.W."/>
            <person name="Zody M.C."/>
            <person name="Goldstein S."/>
            <person name="She X."/>
            <person name="Bult C.J."/>
            <person name="Agarwala R."/>
            <person name="Cherry J.L."/>
            <person name="DiCuccio M."/>
            <person name="Hlavina W."/>
            <person name="Kapustin Y."/>
            <person name="Meric P."/>
            <person name="Maglott D."/>
            <person name="Birtle Z."/>
            <person name="Marques A.C."/>
            <person name="Graves T."/>
            <person name="Zhou S."/>
            <person name="Teague B."/>
            <person name="Potamousis K."/>
            <person name="Churas C."/>
            <person name="Place M."/>
            <person name="Herschleb J."/>
            <person name="Runnheim R."/>
            <person name="Forrest D."/>
            <person name="Amos-Landgraf J."/>
            <person name="Schwartz D.C."/>
            <person name="Cheng Z."/>
            <person name="Lindblad-Toh K."/>
            <person name="Eichler E.E."/>
            <person name="Ponting C.P."/>
        </authorList>
    </citation>
    <scope>NUCLEOTIDE SEQUENCE [LARGE SCALE GENOMIC DNA]</scope>
    <source>
        <strain>C57BL/6J</strain>
    </source>
</reference>
<reference key="16">
    <citation type="journal article" date="2004" name="Genome Res.">
        <title>The status, quality, and expansion of the NIH full-length cDNA project: the Mammalian Gene Collection (MGC).</title>
        <authorList>
            <consortium name="The MGC Project Team"/>
        </authorList>
    </citation>
    <scope>NUCLEOTIDE SEQUENCE [LARGE SCALE MRNA] (ISOFORM 8)</scope>
</reference>
<reference key="17">
    <citation type="journal article" date="1980" name="Proc. Natl. Acad. Sci. U.S.A.">
        <title>Analgesic activity of the naturally occurring heptapeptide [Met]enkephalin-Arg6-Phe7.</title>
        <authorList>
            <person name="Inturrisi C.E."/>
            <person name="Umans J.G."/>
            <person name="Wolff D."/>
            <person name="Stern A.S."/>
            <person name="Lewis R.V."/>
            <person name="Stein S."/>
            <person name="Udenfriend S."/>
        </authorList>
    </citation>
    <scope>FUNCTION</scope>
</reference>
<reference key="18">
    <citation type="journal article" date="1997" name="Proc. Natl. Acad. Sci. U.S.A.">
        <title>Opiate receptor knockout mice define mu receptor roles in endogenous nociceptive responses and morphine-induced analgesia.</title>
        <authorList>
            <person name="Sora I."/>
            <person name="Takahashi N."/>
            <person name="Funada M."/>
            <person name="Ujike H."/>
            <person name="Revay R.S."/>
            <person name="Donovan D.M."/>
            <person name="Miner L.L."/>
            <person name="Uhl G.R."/>
        </authorList>
    </citation>
    <scope>FUNCTION</scope>
</reference>
<reference key="19">
    <citation type="journal article" date="1998" name="Eur. J. Neurosci.">
        <title>Influence of Gz and Gi2 transducer proteins in the affinity of opioid agonists to mu receptors.</title>
        <authorList>
            <person name="Garzon J."/>
            <person name="Castro M."/>
            <person name="Sanchez-Blazquez P."/>
        </authorList>
    </citation>
    <scope>FUNCTION</scope>
    <scope>COUPLING TO GNAZ</scope>
</reference>
<reference key="20">
    <citation type="journal article" date="2000" name="J. Biol. Chem.">
        <title>Oligomerization of mu- and delta-opioid receptors. Generation of novel functional properties.</title>
        <authorList>
            <person name="George S.R."/>
            <person name="Fan T."/>
            <person name="Xie Z."/>
            <person name="Tse R."/>
            <person name="Tam V."/>
            <person name="Varghese G."/>
            <person name="O'Dowd B.F."/>
        </authorList>
    </citation>
    <scope>RECEPTOR HETEROOLIGOMERIZATION</scope>
    <scope>FUNCTION</scope>
    <scope>INTERACTION WITH OPRD1</scope>
</reference>
<reference key="21">
    <citation type="journal article" date="2002" name="Biochem. Biophys. Res. Commun.">
        <title>Dimerization of morphine and orphanin FQ/nociceptin receptors: generation of a novel opioid receptor subtype.</title>
        <authorList>
            <person name="Pan Y.X."/>
            <person name="Bolan E."/>
            <person name="Pasternak G.W."/>
        </authorList>
    </citation>
    <scope>RECEPTOR HETEROOLIGOMERIZATION</scope>
    <scope>INTERACTION WITH OPRL1</scope>
</reference>
<reference key="22">
    <citation type="journal article" date="2003" name="J. Biol. Chem.">
        <title>Opioid agonists have different efficacy profiles for G protein activation, rapid desensitization, and endocytosis of mu-opioid receptors.</title>
        <authorList>
            <person name="Borgland S.L."/>
            <person name="Connor M."/>
            <person name="Osborne P.B."/>
            <person name="Furness J.B."/>
            <person name="Christie M.J."/>
        </authorList>
    </citation>
    <scope>FUNCTION</scope>
    <scope>RECEPTOR DESENSITIZATION</scope>
    <scope>SUBCELLULAR LOCATION</scope>
    <scope>RECEPTOR INTERNALIZATION</scope>
</reference>
<reference key="23">
    <citation type="journal article" date="2003" name="J. Biol. Chem.">
        <title>A novel endocytic recycling signal that distinguishes the membrane trafficking of naturally occurring opioid receptors.</title>
        <authorList>
            <person name="Tanowitz M."/>
            <person name="von Zastrow M."/>
        </authorList>
    </citation>
    <scope>RECEPTOR RECYCLING</scope>
    <scope>MUTAGENESIS OF LEU-387 AND LEU-390</scope>
</reference>
<reference key="24">
    <citation type="journal article" date="2004" name="J. Mol. Med.">
        <title>Genetic analysis of the murine mu opioid receptor: increased complexity of Oprm gene splicing.</title>
        <authorList>
            <person name="Kvam T.M."/>
            <person name="Baar C."/>
            <person name="Rakvag T.T."/>
            <person name="Kaasa S."/>
            <person name="Krokan H.E."/>
            <person name="Skorpen F."/>
        </authorList>
    </citation>
    <scope>ALTERNATIVE SPLICING</scope>
</reference>
<reference key="25">
    <citation type="journal article" date="2005" name="Neuropsychopharmacology">
        <title>The RGSZ2 protein exists in a complex with mu-opioid receptors and regulates the desensitizing capacity of Gz proteins.</title>
        <authorList>
            <person name="Garzan J."/>
            <person name="Rodriguez-Munoz M."/>
            <person name="Lopez-Fando A."/>
            <person name="Sanchez-Blazquez P."/>
        </authorList>
    </citation>
    <scope>FUNCTION</scope>
    <scope>INTERACTION WITH RGS17 AND RGS20</scope>
</reference>
<reference key="26">
    <citation type="journal article" date="2006" name="Br. J. Pharmacol.">
        <title>mu opioid and CB1 cannabinoid receptor interactions: reciprocal inhibition of receptor signaling and neuritogenesis.</title>
        <authorList>
            <person name="Rios C."/>
            <person name="Gomes I."/>
            <person name="Devi L.A."/>
        </authorList>
    </citation>
    <scope>FUNCTION</scope>
    <scope>DISRUPTION PHENOTYPE</scope>
</reference>
<reference key="27">
    <citation type="journal article" date="2007" name="J. Neurochem.">
        <title>RGS9-2 is a negative modulator of mu-opioid receptor function.</title>
        <authorList>
            <person name="Psifogeorgou K."/>
            <person name="Papakosta P."/>
            <person name="Russo S.J."/>
            <person name="Neve R.L."/>
            <person name="Kardassis D."/>
            <person name="Gold S.J."/>
            <person name="Zachariou V."/>
        </authorList>
    </citation>
    <scope>FUNCTION</scope>
    <scope>INTERACTION WITH RGS9</scope>
</reference>
<reference key="28">
    <citation type="journal article" date="2008" name="Neuron">
        <title>Multiple actions of spinophilin regulate mu opioid receptor function.</title>
        <authorList>
            <person name="Charlton J.J."/>
            <person name="Allen P.B."/>
            <person name="Psifogeorgou K."/>
            <person name="Chakravarty S."/>
            <person name="Gomes I."/>
            <person name="Neve R.L."/>
            <person name="Devi L.A."/>
            <person name="Greengard P."/>
            <person name="Nestler E.J."/>
            <person name="Zachariou V."/>
        </authorList>
    </citation>
    <scope>INTERACTION WITH PPP1R9B</scope>
</reference>
<reference key="29">
    <citation type="journal article" date="2008" name="Proc. Natl. Acad. Sci. U.S.A.">
        <title>Cell surface targeting of mu-delta opioid receptor heterodimers by RTP4.</title>
        <authorList>
            <person name="Decaillot F.M."/>
            <person name="Rozenfeld R."/>
            <person name="Gupta A."/>
            <person name="Devi L.A."/>
        </authorList>
    </citation>
    <scope>UBIQUITINATION</scope>
    <scope>RECEPTOR HETEROOLIGOMERIZATION</scope>
    <scope>INTERACTION WITH OPRD1 AND RTP4</scope>
</reference>
<reference key="30">
    <citation type="journal article" date="2010" name="Cell">
        <title>A tissue-specific atlas of mouse protein phosphorylation and expression.</title>
        <authorList>
            <person name="Huttlin E.L."/>
            <person name="Jedrychowski M.P."/>
            <person name="Elias J.E."/>
            <person name="Goswami T."/>
            <person name="Rad R."/>
            <person name="Beausoleil S.A."/>
            <person name="Villen J."/>
            <person name="Haas W."/>
            <person name="Sowa M.E."/>
            <person name="Gygi S.P."/>
        </authorList>
    </citation>
    <scope>PHOSPHORYLATION [LARGE SCALE ANALYSIS] AT SER-363</scope>
    <scope>IDENTIFICATION BY MASS SPECTROMETRY [LARGE SCALE ANALYSIS]</scope>
    <source>
        <tissue>Brain</tissue>
    </source>
</reference>
<reference key="31">
    <citation type="journal article" date="2011" name="Cell">
        <title>Unidirectional cross-activation of GRPR by MOR1D uncouples itch and analgesia induced by opioids.</title>
        <authorList>
            <person name="Liu X.Y."/>
            <person name="Liu Z.C."/>
            <person name="Sun Y.G."/>
            <person name="Ross M."/>
            <person name="Kim S."/>
            <person name="Tsai F.F."/>
            <person name="Li Q.F."/>
            <person name="Jeffry J."/>
            <person name="Kim J.Y."/>
            <person name="Loh H.H."/>
            <person name="Chen Z.F."/>
        </authorList>
    </citation>
    <scope>FUNCTION (ISOFORM 9)</scope>
    <scope>INTERACTION WITH GRPR</scope>
</reference>
<reference key="32">
    <citation type="journal article" date="2011" name="Cell. Mol. Life Sci.">
        <title>The histidine triad nucleotide-binding protein 1 supports mu-opioid receptor-glutamate NMDA receptor cross-regulation.</title>
        <authorList>
            <person name="Rodriguez-Munoz M."/>
            <person name="Sanchez-Blazquez P."/>
            <person name="Vicente-Sanchez A."/>
            <person name="Bailon C."/>
            <person name="Martin-Aznar B."/>
            <person name="Garzon J."/>
        </authorList>
    </citation>
    <scope>INTERACTION WITH HINT1</scope>
</reference>
<reference key="33">
    <citation type="journal article" date="2011" name="J. Pharmacol. Exp. Ther.">
        <title>Heteromerization of the mu- and delta-opioid receptors produces ligand-biased antagonism and alters mu-receptor trafficking.</title>
        <authorList>
            <person name="Milan-Lobo L."/>
            <person name="Whistler J.L."/>
        </authorList>
    </citation>
    <scope>RECEPTOR HETEROOLIGOMERIZATION</scope>
    <scope>FUNCTION</scope>
    <scope>INTERACTION WITH OPRD1</scope>
</reference>
<reference key="34">
    <citation type="journal article" date="2022" name="Science">
        <title>Angiotensin-converting enzyme gates brain circuit-specific plasticity via an endogenous opioid.</title>
        <authorList>
            <person name="Trieu B.H."/>
            <person name="Remmers B.C."/>
            <person name="Toddes C."/>
            <person name="Brandner D.D."/>
            <person name="Lefevre E.M."/>
            <person name="Kocharian A."/>
            <person name="Retzlaff C.L."/>
            <person name="Dick R.M."/>
            <person name="Mashal M.A."/>
            <person name="Gauthier E.A."/>
            <person name="Xie W."/>
            <person name="Zhang Y."/>
            <person name="More S.S."/>
            <person name="Rothwell P.E."/>
        </authorList>
    </citation>
    <scope>FUNCTION</scope>
</reference>
<reference key="35">
    <citation type="journal article" date="2012" name="Nature">
        <title>Crystal structure of the micro-opioid receptor bound to a morphinan antagonist.</title>
        <authorList>
            <person name="Manglik A."/>
            <person name="Kruse A.C."/>
            <person name="Kobilka T.S."/>
            <person name="Thian F.S."/>
            <person name="Mathiesen J.M."/>
            <person name="Sunahara R.K."/>
            <person name="Pardo L."/>
            <person name="Weis W.I."/>
            <person name="Kobilka B.K."/>
            <person name="Granier S."/>
        </authorList>
    </citation>
    <scope>X-RAY CRYSTALLOGRAPHY (2.8 ANGSTROMS) OF 52-360 IN COMPLEX WITH MORPHINAN ANTAGONIST</scope>
    <scope>FUNCTION</scope>
    <scope>SUBCELLULAR LOCATION</scope>
    <scope>TOPOLOGY</scope>
    <scope>DISULFIDE BOND</scope>
</reference>
<reference evidence="38" key="36">
    <citation type="journal article" date="2015" name="Nature">
        <title>Structural insights into u-opioid receptor activation.</title>
        <authorList>
            <person name="Huang W."/>
            <person name="Manglik A."/>
            <person name="Venkatakrishnan A.J."/>
            <person name="Laeremans T."/>
            <person name="Feinberg E.N."/>
            <person name="Sanborn A.L."/>
            <person name="Kato H.E."/>
            <person name="Livingston K.E."/>
            <person name="Thorsen T.S."/>
            <person name="Kling R.C."/>
            <person name="Granier S."/>
            <person name="Gmeiner P."/>
            <person name="Husbands S.M."/>
            <person name="Traynor J.R."/>
            <person name="Weis W.I."/>
            <person name="Steyaert J."/>
            <person name="Dror R.O."/>
            <person name="Kobilka B.K."/>
        </authorList>
    </citation>
    <scope>X-RAY CRYSTALLOGRAPHY (2.10 ANGSTROMS) OF 52-347 IN COMPLEX WITH MORPHINAN AGONIST</scope>
    <scope>FUNCTION</scope>
    <scope>INTERACTION WITH GNAI1; GNB1 AND GNG2</scope>
    <scope>SUBUNIT</scope>
    <scope>DISULFIDE BONDS</scope>
    <scope>SUBCELLULAR LOCATION</scope>
    <scope>TOPOLOGY</scope>
</reference>
<proteinExistence type="evidence at protein level"/>